<proteinExistence type="evidence at protein level"/>
<evidence type="ECO:0000250" key="1">
    <source>
        <dbReference type="UniProtKB" id="G3I8R9"/>
    </source>
</evidence>
<evidence type="ECO:0000250" key="2">
    <source>
        <dbReference type="UniProtKB" id="P11021"/>
    </source>
</evidence>
<evidence type="ECO:0000250" key="3">
    <source>
        <dbReference type="UniProtKB" id="P20029"/>
    </source>
</evidence>
<evidence type="ECO:0000255" key="4"/>
<evidence type="ECO:0000255" key="5">
    <source>
        <dbReference type="PROSITE-ProRule" id="PRU10138"/>
    </source>
</evidence>
<evidence type="ECO:0000256" key="6">
    <source>
        <dbReference type="SAM" id="MobiDB-lite"/>
    </source>
</evidence>
<evidence type="ECO:0000305" key="7"/>
<sequence length="652" mass="72019">MRHLLLALLLLGGARADDEEKKEDVGTVVGIDLGTTYSCVGVFKNGRVEIIANDQGNRITPSYVAFTPEGERLIGDAAKNQLTSNPENTVFDAKRLIGRTWNDPSVQQDIKYLPFKVVEKKAKPHIQVDVGGGQTKTFAPEEISAMVLTKMKETAEAYLGKKVTHAVVTVPAYFNDAQRQATKDAGTIAGLNVMRIINEPTAAAIAYGLDKREGEKNILVFDLGGGTFDVSLLTIDNGVFEVVATNGDTHLGGEDFDQRVMEHFIKLYKKKTGKDVRKDNRAVQKLRREVEKAKRALSSQHQARIEIESFFEGEDFSETLTRAKFEELNMDLFRSTMKPVQKVLEDSDLKKSDIDEIVLVGGSTRIPKIQQLVKEFFNGKEPSRGINPDEAVAYGAAVQAGVLSGDQDTGDLVLLDVCPLTLGIETVGGVMTKLIPRNTVVPTKKSQIFSTASDNQPTVTIKVYEGERPLTKDNHLLGTFDLTGIPPAPRGVPQIEVTFEIDVNGILRVTAEDKGTGNKNKITITNDQNRLTPEEIERMVNDAEKFAEEDKKLKERIDARNELESYAYSLKNQIGDKEKLGGKLSSEDKETIEKAVEEKIEWLESHQDADIEDFKSKKKELEEVVQPIVSKLYGSAGPPPTGEEEAAEKDEL</sequence>
<feature type="signal peptide" evidence="4">
    <location>
        <begin position="1"/>
        <end position="16"/>
    </location>
</feature>
<feature type="chain" id="PRO_0000013570" description="Endoplasmic reticulum chaperone BiP">
    <location>
        <begin position="17"/>
        <end position="652"/>
    </location>
</feature>
<feature type="region of interest" description="Nucleotide-binding (NBD)" evidence="2">
    <location>
        <begin position="123"/>
        <end position="278"/>
    </location>
</feature>
<feature type="region of interest" description="Interdomain linker" evidence="1">
    <location>
        <begin position="407"/>
        <end position="417"/>
    </location>
</feature>
<feature type="region of interest" description="Substrate-binding (SBD)" evidence="2">
    <location>
        <begin position="418"/>
        <end position="498"/>
    </location>
</feature>
<feature type="region of interest" description="Disordered" evidence="6">
    <location>
        <begin position="630"/>
        <end position="652"/>
    </location>
</feature>
<feature type="short sequence motif" description="Prevents secretion from ER" evidence="5">
    <location>
        <begin position="649"/>
        <end position="652"/>
    </location>
</feature>
<feature type="compositionally biased region" description="Acidic residues" evidence="6">
    <location>
        <begin position="642"/>
        <end position="652"/>
    </location>
</feature>
<feature type="binding site" evidence="2">
    <location>
        <begin position="34"/>
        <end position="37"/>
    </location>
    <ligand>
        <name>ATP</name>
        <dbReference type="ChEBI" id="CHEBI:30616"/>
    </ligand>
</feature>
<feature type="binding site" evidence="2">
    <location>
        <position position="94"/>
    </location>
    <ligand>
        <name>ATP</name>
        <dbReference type="ChEBI" id="CHEBI:30616"/>
    </ligand>
</feature>
<feature type="binding site" evidence="2">
    <location>
        <begin position="225"/>
        <end position="227"/>
    </location>
    <ligand>
        <name>ATP</name>
        <dbReference type="ChEBI" id="CHEBI:30616"/>
    </ligand>
</feature>
<feature type="binding site" evidence="2">
    <location>
        <begin position="291"/>
        <end position="298"/>
    </location>
    <ligand>
        <name>ATP</name>
        <dbReference type="ChEBI" id="CHEBI:30616"/>
    </ligand>
</feature>
<feature type="binding site" evidence="2">
    <location>
        <begin position="362"/>
        <end position="365"/>
    </location>
    <ligand>
        <name>ATP</name>
        <dbReference type="ChEBI" id="CHEBI:30616"/>
    </ligand>
</feature>
<keyword id="KW-0067">ATP-binding</keyword>
<keyword id="KW-0143">Chaperone</keyword>
<keyword id="KW-0963">Cytoplasm</keyword>
<keyword id="KW-0256">Endoplasmic reticulum</keyword>
<keyword id="KW-0378">Hydrolase</keyword>
<keyword id="KW-0547">Nucleotide-binding</keyword>
<keyword id="KW-1185">Reference proteome</keyword>
<keyword id="KW-0732">Signal</keyword>
<comment type="function">
    <text evidence="1 2 3">Endoplasmic reticulum chaperone that plays a key role in protein folding and quality control in the endoplasmic reticulum lumen (By similarity). Involved in the correct folding of proteins and degradation of misfolded proteins via its interaction with DNAJC10/ERdj5, probably to facilitate the release of DNAJC10/ERdj5 from its substrate (By similarity). Acts as a key repressor of the EIF2AK3/PERK and ERN1/IRE1-mediated unfolded protein response (UPR). In the unstressed endoplasmic reticulum, recruited by DNAJB9/ERdj4 to the luminal region of ERN1/IRE1, leading to disrupt the dimerization of ERN1/IRE1, thereby inactivating ERN1/IRE1. Also binds and inactivates EIF2AK3/PERK in unstressed cells (By similarity). Accumulation of misfolded protein in the endoplasmic reticulum causes release of HSPA5/BiP from ERN1/IRE1 and EIF2AK3/PERK, allowing their homodimerization and subsequent activation (By similarity). May also play a role in apoptosis and cell proliferation (By similarity).</text>
</comment>
<comment type="catalytic activity">
    <reaction evidence="1">
        <text>ATP + H2O = ADP + phosphate + H(+)</text>
        <dbReference type="Rhea" id="RHEA:13065"/>
        <dbReference type="ChEBI" id="CHEBI:15377"/>
        <dbReference type="ChEBI" id="CHEBI:15378"/>
        <dbReference type="ChEBI" id="CHEBI:30616"/>
        <dbReference type="ChEBI" id="CHEBI:43474"/>
        <dbReference type="ChEBI" id="CHEBI:456216"/>
        <dbReference type="EC" id="3.6.4.10"/>
    </reaction>
</comment>
<comment type="activity regulation">
    <text evidence="1 2">The chaperone activity is regulated by ATP-induced allosteric coupling of the nucleotide-binding (NBD) and substrate-binding (SBD) domains (By similarity). In the ADP-bound and nucleotide-free (apo) states, the two domains have little interaction (By similarity). In contrast, in the ATP-bound state the two domains are tightly coupled, which results in drastically accelerated kinetics in both binding and release of polypeptide substrates (By similarity). J domain-containing co-chaperones (DNAJB9/ERdj4 or DNAJC10/ERdj5) stimulate the ATPase activity and are required for efficient substrate recognition by HSPA5/BiP. Homooligomerization inactivates participating HSPA5/BiP protomers and probably act as reservoirs to store HSPA5/BiP molecules when they are not needed by the cell (By similarity).</text>
</comment>
<comment type="subunit">
    <text evidence="1 2 3">Monomer and homooligomer; homooligomerization via the interdomain linker inactivates the chaperone activity and acts as a storage of HSPA5/BiP molecules (By similarity). Interacts with DNAJC10 (By similarity). Interacts with DNAJB9/ERdj4; leading to recruit HSPA5/BiP to ERN1/IRE1. Interacts with ERN1/IRE1; interaction takes place following interaction with DNAJB9/ERdj4 and leads to inactivate ERN1/IRE1 (By similarity).</text>
</comment>
<comment type="interaction">
    <interactant intactId="EBI-1635886">
        <id>Q90593</id>
    </interactant>
    <interactant intactId="EBI-1635766">
        <id>Q8AYS8</id>
        <label>KCNMA1</label>
    </interactant>
    <organismsDiffer>false</organismsDiffer>
    <experiments>3</experiments>
</comment>
<comment type="subcellular location">
    <subcellularLocation>
        <location evidence="2">Endoplasmic reticulum lumen</location>
    </subcellularLocation>
    <subcellularLocation>
        <location evidence="2">Melanosome</location>
    </subcellularLocation>
    <subcellularLocation>
        <location evidence="3">Cytoplasm</location>
    </subcellularLocation>
    <subcellularLocation>
        <location>Cell surface</location>
    </subcellularLocation>
    <text evidence="2">Identified by mass spectrometry in melanosome fractions from stage I to stage IV (By similarity). Localizes to the cell surface in epithelial cells; high levels of free iron promotes cell surface localization (By similarity).</text>
</comment>
<comment type="domain">
    <text evidence="1">The interdomain linker regulates the chaperone activity by mediating the formation of homooligomers. Homooligomers are formed by engagement of the interdomain linker of one HSPA5/BiP molecule as a typical substrate of an adjacent HSPA5/BiP molecule. HSPA5/BiP oligomerization inactivates participating HSPA5/BiP protomers. HSPA5/BiP oligomers probably act as reservoirs to store HSPA5/BiP molecules when they are not needed by the cell. When the levels of unfolded proteins rise, cells can rapidly break up these oligomers to make active monomers.</text>
</comment>
<comment type="similarity">
    <text evidence="7">Belongs to the heat shock protein 70 family.</text>
</comment>
<name>BIP_CHICK</name>
<reference key="1">
    <citation type="journal article" date="1988" name="Mol. Cell. Biol.">
        <title>78-kilodalton glucose-regulated protein is induced in Rous sarcoma virus-transformed cells independently of glucose deprivation.</title>
        <authorList>
            <person name="Stoeckle M.Y."/>
            <person name="Sugano S."/>
            <person name="Hampe A."/>
            <person name="Vashishtha A."/>
            <person name="Pellman D."/>
            <person name="Hanafusa H."/>
        </authorList>
    </citation>
    <scope>NUCLEOTIDE SEQUENCE [MRNA]</scope>
</reference>
<organism>
    <name type="scientific">Gallus gallus</name>
    <name type="common">Chicken</name>
    <dbReference type="NCBI Taxonomy" id="9031"/>
    <lineage>
        <taxon>Eukaryota</taxon>
        <taxon>Metazoa</taxon>
        <taxon>Chordata</taxon>
        <taxon>Craniata</taxon>
        <taxon>Vertebrata</taxon>
        <taxon>Euteleostomi</taxon>
        <taxon>Archelosauria</taxon>
        <taxon>Archosauria</taxon>
        <taxon>Dinosauria</taxon>
        <taxon>Saurischia</taxon>
        <taxon>Theropoda</taxon>
        <taxon>Coelurosauria</taxon>
        <taxon>Aves</taxon>
        <taxon>Neognathae</taxon>
        <taxon>Galloanserae</taxon>
        <taxon>Galliformes</taxon>
        <taxon>Phasianidae</taxon>
        <taxon>Phasianinae</taxon>
        <taxon>Gallus</taxon>
    </lineage>
</organism>
<accession>Q90593</accession>
<protein>
    <recommendedName>
        <fullName evidence="2">Endoplasmic reticulum chaperone BiP</fullName>
        <ecNumber evidence="2">3.6.4.10</ecNumber>
    </recommendedName>
    <alternativeName>
        <fullName evidence="2">78 kDa glucose-regulated protein</fullName>
        <shortName evidence="2">GRP-78</shortName>
    </alternativeName>
    <alternativeName>
        <fullName evidence="2">Binding-immunoglobulin protein</fullName>
        <shortName evidence="2">BiP</shortName>
    </alternativeName>
    <alternativeName>
        <fullName evidence="2">Heat shock protein 70 family protein 5</fullName>
        <shortName evidence="2">HSP70 family protein 5</shortName>
    </alternativeName>
    <alternativeName>
        <fullName evidence="2">Heat shock protein family A member 5</fullName>
    </alternativeName>
    <alternativeName>
        <fullName evidence="2">Immunoglobulin heavy chain-binding protein</fullName>
    </alternativeName>
</protein>
<dbReference type="EC" id="3.6.4.10" evidence="2"/>
<dbReference type="EMBL" id="M27260">
    <property type="protein sequence ID" value="AAA48785.1"/>
    <property type="molecule type" value="mRNA"/>
</dbReference>
<dbReference type="PIR" id="I50242">
    <property type="entry name" value="I50242"/>
</dbReference>
<dbReference type="RefSeq" id="NP_990822.1">
    <property type="nucleotide sequence ID" value="NM_205491.2"/>
</dbReference>
<dbReference type="RefSeq" id="XP_040504914.1">
    <property type="nucleotide sequence ID" value="XM_040648980.2"/>
</dbReference>
<dbReference type="RefSeq" id="XP_046784744.1">
    <property type="nucleotide sequence ID" value="XM_046928788.1"/>
</dbReference>
<dbReference type="SMR" id="Q90593"/>
<dbReference type="BioGRID" id="676734">
    <property type="interactions" value="3"/>
</dbReference>
<dbReference type="FunCoup" id="Q90593">
    <property type="interactions" value="2422"/>
</dbReference>
<dbReference type="IntAct" id="Q90593">
    <property type="interactions" value="1"/>
</dbReference>
<dbReference type="STRING" id="9031.ENSGALP00000001474"/>
<dbReference type="PaxDb" id="9031-ENSGALP00000001474"/>
<dbReference type="Ensembl" id="ENSGALT00010067786.1">
    <property type="protein sequence ID" value="ENSGALP00010041529.1"/>
    <property type="gene ID" value="ENSGALG00010027969.1"/>
</dbReference>
<dbReference type="GeneID" id="396487"/>
<dbReference type="KEGG" id="gga:396487"/>
<dbReference type="CTD" id="3309"/>
<dbReference type="VEuPathDB" id="HostDB:geneid_396487"/>
<dbReference type="eggNOG" id="KOG0100">
    <property type="taxonomic scope" value="Eukaryota"/>
</dbReference>
<dbReference type="GeneTree" id="ENSGT00940000154787"/>
<dbReference type="HOGENOM" id="CLU_005965_7_2_1"/>
<dbReference type="InParanoid" id="Q90593"/>
<dbReference type="OMA" id="VQRDIKH"/>
<dbReference type="OrthoDB" id="2401965at2759"/>
<dbReference type="PhylomeDB" id="Q90593"/>
<dbReference type="TreeFam" id="TF105044"/>
<dbReference type="Reactome" id="R-GGA-983170">
    <property type="pathway name" value="Antigen Presentation: Folding, assembly and peptide loading of class I MHC"/>
</dbReference>
<dbReference type="Reactome" id="R-GGA-9909505">
    <property type="pathway name" value="Modulation of host responses by IFN-stimulated genes"/>
</dbReference>
<dbReference type="PRO" id="PR:Q90593"/>
<dbReference type="Proteomes" id="UP000000539">
    <property type="component" value="Chromosome 17"/>
</dbReference>
<dbReference type="Bgee" id="ENSGALG00000001000">
    <property type="expression patterns" value="Expressed in spermatocyte and 13 other cell types or tissues"/>
</dbReference>
<dbReference type="GO" id="GO:0009986">
    <property type="term" value="C:cell surface"/>
    <property type="evidence" value="ECO:0007669"/>
    <property type="project" value="UniProtKB-SubCell"/>
</dbReference>
<dbReference type="GO" id="GO:0008180">
    <property type="term" value="C:COP9 signalosome"/>
    <property type="evidence" value="ECO:0007669"/>
    <property type="project" value="Ensembl"/>
</dbReference>
<dbReference type="GO" id="GO:0005737">
    <property type="term" value="C:cytoplasm"/>
    <property type="evidence" value="ECO:0000318"/>
    <property type="project" value="GO_Central"/>
</dbReference>
<dbReference type="GO" id="GO:0005829">
    <property type="term" value="C:cytosol"/>
    <property type="evidence" value="ECO:0007669"/>
    <property type="project" value="Ensembl"/>
</dbReference>
<dbReference type="GO" id="GO:0034663">
    <property type="term" value="C:endoplasmic reticulum chaperone complex"/>
    <property type="evidence" value="ECO:0000318"/>
    <property type="project" value="GO_Central"/>
</dbReference>
<dbReference type="GO" id="GO:0005788">
    <property type="term" value="C:endoplasmic reticulum lumen"/>
    <property type="evidence" value="ECO:0000318"/>
    <property type="project" value="GO_Central"/>
</dbReference>
<dbReference type="GO" id="GO:0005789">
    <property type="term" value="C:endoplasmic reticulum membrane"/>
    <property type="evidence" value="ECO:0007669"/>
    <property type="project" value="Ensembl"/>
</dbReference>
<dbReference type="GO" id="GO:0005793">
    <property type="term" value="C:endoplasmic reticulum-Golgi intermediate compartment"/>
    <property type="evidence" value="ECO:0007669"/>
    <property type="project" value="Ensembl"/>
</dbReference>
<dbReference type="GO" id="GO:0042470">
    <property type="term" value="C:melanosome"/>
    <property type="evidence" value="ECO:0007669"/>
    <property type="project" value="UniProtKB-SubCell"/>
</dbReference>
<dbReference type="GO" id="GO:0016020">
    <property type="term" value="C:membrane"/>
    <property type="evidence" value="ECO:0000318"/>
    <property type="project" value="GO_Central"/>
</dbReference>
<dbReference type="GO" id="GO:0030496">
    <property type="term" value="C:midbody"/>
    <property type="evidence" value="ECO:0007669"/>
    <property type="project" value="Ensembl"/>
</dbReference>
<dbReference type="GO" id="GO:0005739">
    <property type="term" value="C:mitochondrion"/>
    <property type="evidence" value="ECO:0007669"/>
    <property type="project" value="Ensembl"/>
</dbReference>
<dbReference type="GO" id="GO:0005634">
    <property type="term" value="C:nucleus"/>
    <property type="evidence" value="ECO:0000318"/>
    <property type="project" value="GO_Central"/>
</dbReference>
<dbReference type="GO" id="GO:0005886">
    <property type="term" value="C:plasma membrane"/>
    <property type="evidence" value="ECO:0007669"/>
    <property type="project" value="Ensembl"/>
</dbReference>
<dbReference type="GO" id="GO:0005524">
    <property type="term" value="F:ATP binding"/>
    <property type="evidence" value="ECO:0007669"/>
    <property type="project" value="UniProtKB-KW"/>
</dbReference>
<dbReference type="GO" id="GO:0016887">
    <property type="term" value="F:ATP hydrolysis activity"/>
    <property type="evidence" value="ECO:0000250"/>
    <property type="project" value="UniProtKB"/>
</dbReference>
<dbReference type="GO" id="GO:0140662">
    <property type="term" value="F:ATP-dependent protein folding chaperone"/>
    <property type="evidence" value="ECO:0007669"/>
    <property type="project" value="InterPro"/>
</dbReference>
<dbReference type="GO" id="GO:0031072">
    <property type="term" value="F:heat shock protein binding"/>
    <property type="evidence" value="ECO:0000318"/>
    <property type="project" value="GO_Central"/>
</dbReference>
<dbReference type="GO" id="GO:0051787">
    <property type="term" value="F:misfolded protein binding"/>
    <property type="evidence" value="ECO:0007669"/>
    <property type="project" value="Ensembl"/>
</dbReference>
<dbReference type="GO" id="GO:0019904">
    <property type="term" value="F:protein domain specific binding"/>
    <property type="evidence" value="ECO:0007669"/>
    <property type="project" value="Ensembl"/>
</dbReference>
<dbReference type="GO" id="GO:0044183">
    <property type="term" value="F:protein folding chaperone"/>
    <property type="evidence" value="ECO:0000318"/>
    <property type="project" value="GO_Central"/>
</dbReference>
<dbReference type="GO" id="GO:0030291">
    <property type="term" value="F:protein serine/threonine kinase inhibitor activity"/>
    <property type="evidence" value="ECO:0007669"/>
    <property type="project" value="Ensembl"/>
</dbReference>
<dbReference type="GO" id="GO:0043022">
    <property type="term" value="F:ribosome binding"/>
    <property type="evidence" value="ECO:0007669"/>
    <property type="project" value="Ensembl"/>
</dbReference>
<dbReference type="GO" id="GO:0031625">
    <property type="term" value="F:ubiquitin protein ligase binding"/>
    <property type="evidence" value="ECO:0007669"/>
    <property type="project" value="Ensembl"/>
</dbReference>
<dbReference type="GO" id="GO:0042149">
    <property type="term" value="P:cellular response to glucose starvation"/>
    <property type="evidence" value="ECO:0007669"/>
    <property type="project" value="Ensembl"/>
</dbReference>
<dbReference type="GO" id="GO:0071353">
    <property type="term" value="P:cellular response to interleukin-4"/>
    <property type="evidence" value="ECO:0007669"/>
    <property type="project" value="Ensembl"/>
</dbReference>
<dbReference type="GO" id="GO:0021680">
    <property type="term" value="P:cerebellar Purkinje cell layer development"/>
    <property type="evidence" value="ECO:0007669"/>
    <property type="project" value="Ensembl"/>
</dbReference>
<dbReference type="GO" id="GO:0021589">
    <property type="term" value="P:cerebellum structural organization"/>
    <property type="evidence" value="ECO:0007669"/>
    <property type="project" value="Ensembl"/>
</dbReference>
<dbReference type="GO" id="GO:0051085">
    <property type="term" value="P:chaperone cofactor-dependent protein refolding"/>
    <property type="evidence" value="ECO:0000318"/>
    <property type="project" value="GO_Central"/>
</dbReference>
<dbReference type="GO" id="GO:0030968">
    <property type="term" value="P:endoplasmic reticulum unfolded protein response"/>
    <property type="evidence" value="ECO:0000318"/>
    <property type="project" value="GO_Central"/>
</dbReference>
<dbReference type="GO" id="GO:0006983">
    <property type="term" value="P:ER overload response"/>
    <property type="evidence" value="ECO:0007669"/>
    <property type="project" value="Ensembl"/>
</dbReference>
<dbReference type="GO" id="GO:0036503">
    <property type="term" value="P:ERAD pathway"/>
    <property type="evidence" value="ECO:0000318"/>
    <property type="project" value="GO_Central"/>
</dbReference>
<dbReference type="GO" id="GO:0035437">
    <property type="term" value="P:maintenance of protein localization in endoplasmic reticulum"/>
    <property type="evidence" value="ECO:0007669"/>
    <property type="project" value="Ensembl"/>
</dbReference>
<dbReference type="GO" id="GO:0043066">
    <property type="term" value="P:negative regulation of apoptotic process"/>
    <property type="evidence" value="ECO:0007669"/>
    <property type="project" value="Ensembl"/>
</dbReference>
<dbReference type="GO" id="GO:1903895">
    <property type="term" value="P:negative regulation of IRE1-mediated unfolded protein response"/>
    <property type="evidence" value="ECO:0000250"/>
    <property type="project" value="UniProtKB"/>
</dbReference>
<dbReference type="GO" id="GO:1903898">
    <property type="term" value="P:negative regulation of PERK-mediated unfolded protein response"/>
    <property type="evidence" value="ECO:0007669"/>
    <property type="project" value="Ensembl"/>
</dbReference>
<dbReference type="GO" id="GO:0031333">
    <property type="term" value="P:negative regulation of protein-containing complex assembly"/>
    <property type="evidence" value="ECO:0000250"/>
    <property type="project" value="UniProtKB"/>
</dbReference>
<dbReference type="GO" id="GO:0030512">
    <property type="term" value="P:negative regulation of transforming growth factor beta receptor signaling pathway"/>
    <property type="evidence" value="ECO:0007669"/>
    <property type="project" value="Ensembl"/>
</dbReference>
<dbReference type="GO" id="GO:0030335">
    <property type="term" value="P:positive regulation of cell migration"/>
    <property type="evidence" value="ECO:0007669"/>
    <property type="project" value="Ensembl"/>
</dbReference>
<dbReference type="GO" id="GO:0031398">
    <property type="term" value="P:positive regulation of protein ubiquitination"/>
    <property type="evidence" value="ECO:0007669"/>
    <property type="project" value="Ensembl"/>
</dbReference>
<dbReference type="GO" id="GO:0031204">
    <property type="term" value="P:post-translational protein targeting to membrane, translocation"/>
    <property type="evidence" value="ECO:0007669"/>
    <property type="project" value="Ensembl"/>
</dbReference>
<dbReference type="GO" id="GO:0042026">
    <property type="term" value="P:protein refolding"/>
    <property type="evidence" value="ECO:0000318"/>
    <property type="project" value="GO_Central"/>
</dbReference>
<dbReference type="CDD" id="cd10241">
    <property type="entry name" value="ASKHA_NBD_HSP70_BiP"/>
    <property type="match status" value="1"/>
</dbReference>
<dbReference type="FunFam" id="3.30.420.40:FF:000720">
    <property type="entry name" value="Endoplasmic reticulum chaperone BiP"/>
    <property type="match status" value="1"/>
</dbReference>
<dbReference type="FunFam" id="3.90.640.10:FF:000153">
    <property type="entry name" value="Endoplasmic reticulum chaperone BiP"/>
    <property type="match status" value="1"/>
</dbReference>
<dbReference type="FunFam" id="2.60.34.10:FF:000002">
    <property type="entry name" value="Heat shock 70 kDa"/>
    <property type="match status" value="1"/>
</dbReference>
<dbReference type="FunFam" id="3.30.30.30:FF:000001">
    <property type="entry name" value="heat shock 70 kDa protein-like"/>
    <property type="match status" value="1"/>
</dbReference>
<dbReference type="FunFam" id="1.20.1270.10:FF:000061">
    <property type="entry name" value="Heat shock protein family A (Hsp70) member 5"/>
    <property type="match status" value="1"/>
</dbReference>
<dbReference type="Gene3D" id="1.20.1270.10">
    <property type="match status" value="1"/>
</dbReference>
<dbReference type="Gene3D" id="3.30.420.40">
    <property type="match status" value="2"/>
</dbReference>
<dbReference type="Gene3D" id="3.90.640.10">
    <property type="entry name" value="Actin, Chain A, domain 4"/>
    <property type="match status" value="1"/>
</dbReference>
<dbReference type="Gene3D" id="2.60.34.10">
    <property type="entry name" value="Substrate Binding Domain Of DNAk, Chain A, domain 1"/>
    <property type="match status" value="1"/>
</dbReference>
<dbReference type="InterPro" id="IPR043129">
    <property type="entry name" value="ATPase_NBD"/>
</dbReference>
<dbReference type="InterPro" id="IPR042050">
    <property type="entry name" value="BIP_NBD"/>
</dbReference>
<dbReference type="InterPro" id="IPR018181">
    <property type="entry name" value="Heat_shock_70_CS"/>
</dbReference>
<dbReference type="InterPro" id="IPR029048">
    <property type="entry name" value="HSP70_C_sf"/>
</dbReference>
<dbReference type="InterPro" id="IPR029047">
    <property type="entry name" value="HSP70_peptide-bd_sf"/>
</dbReference>
<dbReference type="InterPro" id="IPR013126">
    <property type="entry name" value="Hsp_70_fam"/>
</dbReference>
<dbReference type="NCBIfam" id="NF001413">
    <property type="entry name" value="PRK00290.1"/>
    <property type="match status" value="1"/>
</dbReference>
<dbReference type="PANTHER" id="PTHR19375">
    <property type="entry name" value="HEAT SHOCK PROTEIN 70KDA"/>
    <property type="match status" value="1"/>
</dbReference>
<dbReference type="Pfam" id="PF00012">
    <property type="entry name" value="HSP70"/>
    <property type="match status" value="1"/>
</dbReference>
<dbReference type="PRINTS" id="PR00301">
    <property type="entry name" value="HEATSHOCK70"/>
</dbReference>
<dbReference type="SUPFAM" id="SSF53067">
    <property type="entry name" value="Actin-like ATPase domain"/>
    <property type="match status" value="2"/>
</dbReference>
<dbReference type="SUPFAM" id="SSF100934">
    <property type="entry name" value="Heat shock protein 70kD (HSP70), C-terminal subdomain"/>
    <property type="match status" value="1"/>
</dbReference>
<dbReference type="SUPFAM" id="SSF100920">
    <property type="entry name" value="Heat shock protein 70kD (HSP70), peptide-binding domain"/>
    <property type="match status" value="1"/>
</dbReference>
<dbReference type="PROSITE" id="PS00014">
    <property type="entry name" value="ER_TARGET"/>
    <property type="match status" value="1"/>
</dbReference>
<dbReference type="PROSITE" id="PS00297">
    <property type="entry name" value="HSP70_1"/>
    <property type="match status" value="1"/>
</dbReference>
<dbReference type="PROSITE" id="PS00329">
    <property type="entry name" value="HSP70_2"/>
    <property type="match status" value="1"/>
</dbReference>
<dbReference type="PROSITE" id="PS01036">
    <property type="entry name" value="HSP70_3"/>
    <property type="match status" value="1"/>
</dbReference>
<gene>
    <name evidence="2" type="primary">HSPA5</name>
    <name evidence="2" type="synonym">GRP78</name>
</gene>